<comment type="function">
    <text evidence="2 7 9 10 11">Probable Polycomb group (PcG) protein involved in transcriptional regulation mediated by ligand-bound nuclear hormone receptors, such as retinoic acid receptors (RARs) and peroxisome proliferator-activated receptor gamma (PPARG) (PubMed:16606617). Acts as a coactivator of RARA and RXRA through association with NCOA1 (PubMed:16606617). Acts as a corepressor for PPARG and suppresses its adipocyte differentiation-inducing activity (PubMed:21047783). Non-catalytic component of the PR-DUB complex, a complex that specifically mediates deubiquitination of histone H2A monoubiquitinated at 'Lys-119' (H2AK119ub1) (By similarity). Acts as a sensor of N(6)-methyladenine methylation on DNA (6mA): recognizes and binds 6mA DNA, leading to its ubiquitination and degradation by TRIP12, thereby inactivating the PR-DUB complex and regulating Polycomb silencing (By similarity). The PR-DUB complex is an epigenetic regulator of gene expression and acts as a transcriptional coactivator, affecting genes involved in development, cell communication, signaling, cell proliferation and cell viability (By similarity). ASXL1, ASXL2 and ASXL3 function redundantly in the PR-DUB complex (By similarity) (PubMed:32747411). The ASXL proteins are essential for chromatin recruitment and transcriptional activation of associated genes (PubMed:32747411). ASXL1 and ASXL2 are important for BAP1 protein stability (By similarity). Together with BAP1, negatively regulates epithelial-mesenchymal transition (EMT) of trophoblast stem cells during placental development by regulating genes involved in epithelial cell integrity, cell adhesion and cytoskeletal organization (PubMed:34170818).</text>
</comment>
<comment type="subunit">
    <text evidence="2 7 9 11">Core component of the polycomb repressive deubiquitinase (PR-DUB) complex, at least composed of BAP1, one of ASXL1, ASXL2 or (probably) ASXL3, and one of MBD5 or MBD6 (By similarity). Distinct combinations of ASXL and MBD proteins may preferentially bind specific histone modification marks (By similarity). The PR-DUB core associates with a number of accessory proteins, including FOXK1, FOXK2, KDM1B, HCFC1 and OGT; KDM1B specifically associates with ASXL2 PR-DUB complexes (By similarity). Interacts (via DEUBAD domain) with BAP1 (via ULD domain); the interaction is direct and forms a ubiquitin binding cleft (By similarity) (PubMed:34170818). The interaction with BAP1 is important for maintaining BAP1 stability (By similarity). Together with BAP1, associates (via DEUBAD domain) with nucleosomes; interacts with nucleosomal DNA and stabilizes the orientation of the nucleosome to line up the PR-DUB complex active site with its H2AK118ub1 substrate (By similarity). Interacts (via PHD domain) with MBD5 and MBD6 (via MBD domain); the interaction is probably direct and mediates association of MBD proteins with the PR-DUB core (By similarity). Interacts with RARA, RXRA (PubMed:16606617). Interacts with NCOA1 (By similarity). Interacts with PPARA and PPARG (PubMed:21047783).</text>
</comment>
<comment type="interaction">
    <interactant intactId="EBI-5743705">
        <id>P59598</id>
    </interactant>
    <interactant intactId="EBI-346715">
        <id>P28700</id>
        <label>Rxra</label>
    </interactant>
    <organismsDiffer>false</organismsDiffer>
    <experiments>2</experiments>
</comment>
<comment type="interaction">
    <interactant intactId="EBI-5743705">
        <id>P59598</id>
    </interactant>
    <interactant intactId="EBI-78473">
        <id>P03372</id>
        <label>ESR1</label>
    </interactant>
    <organismsDiffer>true</organismsDiffer>
    <experiments>2</experiments>
</comment>
<comment type="interaction">
    <interactant intactId="EBI-5743705">
        <id>P59598</id>
    </interactant>
    <interactant intactId="EBI-455189">
        <id>Q15788</id>
        <label>NCOA1</label>
    </interactant>
    <organismsDiffer>true</organismsDiffer>
    <experiments>2</experiments>
</comment>
<comment type="interaction">
    <interactant intactId="EBI-5743705">
        <id>P59598</id>
    </interactant>
    <interactant intactId="EBI-493507">
        <id>P04150</id>
        <label>NR3C1</label>
    </interactant>
    <organismsDiffer>true</organismsDiffer>
    <experiments>2</experiments>
</comment>
<comment type="interaction">
    <interactant intactId="EBI-5743705">
        <id>P59598</id>
    </interactant>
    <interactant intactId="EBI-413374">
        <id>P10276</id>
        <label>RARA</label>
    </interactant>
    <organismsDiffer>true</organismsDiffer>
    <experiments>4</experiments>
</comment>
<comment type="subcellular location">
    <subcellularLocation>
        <location evidence="12">Nucleus</location>
    </subcellularLocation>
</comment>
<comment type="developmental stage">
    <text evidence="11">Expressed in trophoblast stem cells during placental development and down-regulated during trophoblast differentiation (at protein level).</text>
</comment>
<comment type="domain">
    <text evidence="1">Contains two Leu-Xaa-Xaa-Leu-Leu (LXXLL) motifs, which may be required for an association with nuclear receptors.</text>
</comment>
<comment type="domain">
    <text evidence="2">The HARE HTH-type domain recognizes and binds N(6)-methyladenine methylated DNA (6mA).</text>
</comment>
<comment type="domain">
    <text evidence="2">The deubiquitinase adapter domain (DEUBAD), together with the BAP1 UCH domain, forms the ubiquitin binding cleft of the PR-DUB complex.</text>
</comment>
<comment type="domain">
    <text evidence="2">The Asn-Glu-Phe (NEF) motif stabilizes the interaction of BAP1 and UBB/ubiquitin.</text>
</comment>
<comment type="PTM">
    <text evidence="2">Ubiquitinated by TRIP12, leading to its subsequent degradation following binding of N(6)-methyladenine methylated DNA (6mA).</text>
</comment>
<comment type="similarity">
    <text evidence="12">Belongs to the Asx family.</text>
</comment>
<comment type="caution">
    <text evidence="8">Was reported to act as a corepressor through recruitment of KDM1A and CBX; this publication has been retracted.</text>
</comment>
<comment type="sequence caution" evidence="12">
    <conflict type="erroneous initiation">
        <sequence resource="EMBL-CDS" id="BAC65695"/>
    </conflict>
</comment>
<dbReference type="EMBL" id="AK122413">
    <property type="protein sequence ID" value="BAC65695.1"/>
    <property type="status" value="ALT_INIT"/>
    <property type="molecule type" value="mRNA"/>
</dbReference>
<dbReference type="CCDS" id="CCDS38285.1"/>
<dbReference type="RefSeq" id="NP_001035028.1">
    <property type="nucleotide sequence ID" value="NM_001039939.2"/>
</dbReference>
<dbReference type="SMR" id="P59598"/>
<dbReference type="BioGRID" id="230772">
    <property type="interactions" value="2"/>
</dbReference>
<dbReference type="ComplexPortal" id="CPX-423">
    <property type="entry name" value="PR-DUB complex"/>
</dbReference>
<dbReference type="CORUM" id="P59598"/>
<dbReference type="FunCoup" id="P59598">
    <property type="interactions" value="4006"/>
</dbReference>
<dbReference type="IntAct" id="P59598">
    <property type="interactions" value="8"/>
</dbReference>
<dbReference type="STRING" id="10090.ENSMUSP00000105413"/>
<dbReference type="GlyGen" id="P59598">
    <property type="glycosylation" value="2 sites, 1 O-linked glycan (1 site)"/>
</dbReference>
<dbReference type="iPTMnet" id="P59598"/>
<dbReference type="PhosphoSitePlus" id="P59598"/>
<dbReference type="PaxDb" id="10090-ENSMUSP00000105413"/>
<dbReference type="PeptideAtlas" id="P59598"/>
<dbReference type="ProteomicsDB" id="277262"/>
<dbReference type="Antibodypedia" id="10384">
    <property type="antibodies" value="118 antibodies from 25 providers"/>
</dbReference>
<dbReference type="Ensembl" id="ENSMUST00000109790.2">
    <property type="protein sequence ID" value="ENSMUSP00000105413.2"/>
    <property type="gene ID" value="ENSMUSG00000042548.15"/>
</dbReference>
<dbReference type="GeneID" id="228790"/>
<dbReference type="KEGG" id="mmu:228790"/>
<dbReference type="UCSC" id="uc033hqx.1">
    <property type="organism name" value="mouse"/>
</dbReference>
<dbReference type="AGR" id="MGI:2684063"/>
<dbReference type="CTD" id="171023"/>
<dbReference type="MGI" id="MGI:2684063">
    <property type="gene designation" value="Asxl1"/>
</dbReference>
<dbReference type="VEuPathDB" id="HostDB:ENSMUSG00000042548"/>
<dbReference type="eggNOG" id="ENOG502QWT2">
    <property type="taxonomic scope" value="Eukaryota"/>
</dbReference>
<dbReference type="GeneTree" id="ENSGT00520000055578"/>
<dbReference type="HOGENOM" id="CLU_247862_0_0_1"/>
<dbReference type="InParanoid" id="P59598"/>
<dbReference type="OMA" id="DGHFKRR"/>
<dbReference type="OrthoDB" id="9348951at2759"/>
<dbReference type="PhylomeDB" id="P59598"/>
<dbReference type="TreeFam" id="TF328464"/>
<dbReference type="Reactome" id="R-MMU-5689603">
    <property type="pathway name" value="UCH proteinases"/>
</dbReference>
<dbReference type="BioGRID-ORCS" id="228790">
    <property type="hits" value="2 hits in 84 CRISPR screens"/>
</dbReference>
<dbReference type="ChiTaRS" id="Asxl1">
    <property type="organism name" value="mouse"/>
</dbReference>
<dbReference type="PRO" id="PR:P59598"/>
<dbReference type="Proteomes" id="UP000000589">
    <property type="component" value="Chromosome 2"/>
</dbReference>
<dbReference type="RNAct" id="P59598">
    <property type="molecule type" value="protein"/>
</dbReference>
<dbReference type="Bgee" id="ENSMUSG00000042548">
    <property type="expression patterns" value="Expressed in respiratory primordium and 264 other cell types or tissues"/>
</dbReference>
<dbReference type="ExpressionAtlas" id="P59598">
    <property type="expression patterns" value="baseline and differential"/>
</dbReference>
<dbReference type="GO" id="GO:0005634">
    <property type="term" value="C:nucleus"/>
    <property type="evidence" value="ECO:0000314"/>
    <property type="project" value="MGI"/>
</dbReference>
<dbReference type="GO" id="GO:0035517">
    <property type="term" value="C:PR-DUB complex"/>
    <property type="evidence" value="ECO:0000250"/>
    <property type="project" value="UniProtKB"/>
</dbReference>
<dbReference type="GO" id="GO:0003677">
    <property type="term" value="F:DNA binding"/>
    <property type="evidence" value="ECO:0007669"/>
    <property type="project" value="InterPro"/>
</dbReference>
<dbReference type="GO" id="GO:0042974">
    <property type="term" value="F:nuclear retinoic acid receptor binding"/>
    <property type="evidence" value="ECO:0000314"/>
    <property type="project" value="UniProtKB"/>
</dbReference>
<dbReference type="GO" id="GO:0042975">
    <property type="term" value="F:peroxisome proliferator activated receptor binding"/>
    <property type="evidence" value="ECO:0000314"/>
    <property type="project" value="UniProtKB"/>
</dbReference>
<dbReference type="GO" id="GO:0003713">
    <property type="term" value="F:transcription coactivator activity"/>
    <property type="evidence" value="ECO:0000314"/>
    <property type="project" value="UniProtKB"/>
</dbReference>
<dbReference type="GO" id="GO:0008270">
    <property type="term" value="F:zinc ion binding"/>
    <property type="evidence" value="ECO:0007669"/>
    <property type="project" value="UniProtKB-KW"/>
</dbReference>
<dbReference type="GO" id="GO:0009887">
    <property type="term" value="P:animal organ morphogenesis"/>
    <property type="evidence" value="ECO:0000315"/>
    <property type="project" value="MGI"/>
</dbReference>
<dbReference type="GO" id="GO:0060348">
    <property type="term" value="P:bone development"/>
    <property type="evidence" value="ECO:0000315"/>
    <property type="project" value="MGI"/>
</dbReference>
<dbReference type="GO" id="GO:0048539">
    <property type="term" value="P:bone marrow development"/>
    <property type="evidence" value="ECO:0000315"/>
    <property type="project" value="MGI"/>
</dbReference>
<dbReference type="GO" id="GO:0000902">
    <property type="term" value="P:cell morphogenesis"/>
    <property type="evidence" value="ECO:0000315"/>
    <property type="project" value="MGI"/>
</dbReference>
<dbReference type="GO" id="GO:0006325">
    <property type="term" value="P:chromatin organization"/>
    <property type="evidence" value="ECO:0007669"/>
    <property type="project" value="UniProtKB-KW"/>
</dbReference>
<dbReference type="GO" id="GO:0003007">
    <property type="term" value="P:heart morphogenesis"/>
    <property type="evidence" value="ECO:0000315"/>
    <property type="project" value="MGI"/>
</dbReference>
<dbReference type="GO" id="GO:0048534">
    <property type="term" value="P:hematopoietic or lymphoid organ development"/>
    <property type="evidence" value="ECO:0000315"/>
    <property type="project" value="MGI"/>
</dbReference>
<dbReference type="GO" id="GO:0030097">
    <property type="term" value="P:hemopoiesis"/>
    <property type="evidence" value="ECO:0000315"/>
    <property type="project" value="MGI"/>
</dbReference>
<dbReference type="GO" id="GO:0048872">
    <property type="term" value="P:homeostasis of number of cells"/>
    <property type="evidence" value="ECO:0000315"/>
    <property type="project" value="MGI"/>
</dbReference>
<dbReference type="GO" id="GO:0060430">
    <property type="term" value="P:lung saccule development"/>
    <property type="evidence" value="ECO:0000315"/>
    <property type="project" value="MGI"/>
</dbReference>
<dbReference type="GO" id="GO:0045599">
    <property type="term" value="P:negative regulation of fat cell differentiation"/>
    <property type="evidence" value="ECO:0000314"/>
    <property type="project" value="UniProtKB"/>
</dbReference>
<dbReference type="GO" id="GO:0035359">
    <property type="term" value="P:negative regulation of peroxisome proliferator activated receptor signaling pathway"/>
    <property type="evidence" value="ECO:0000314"/>
    <property type="project" value="UniProtKB"/>
</dbReference>
<dbReference type="GO" id="GO:0072015">
    <property type="term" value="P:podocyte development"/>
    <property type="evidence" value="ECO:0000315"/>
    <property type="project" value="CACAO"/>
</dbReference>
<dbReference type="GO" id="GO:0048386">
    <property type="term" value="P:positive regulation of retinoic acid receptor signaling pathway"/>
    <property type="evidence" value="ECO:0000314"/>
    <property type="project" value="UniProtKB"/>
</dbReference>
<dbReference type="GO" id="GO:0045944">
    <property type="term" value="P:positive regulation of transcription by RNA polymerase II"/>
    <property type="evidence" value="ECO:0000314"/>
    <property type="project" value="UniProtKB"/>
</dbReference>
<dbReference type="GO" id="GO:0035564">
    <property type="term" value="P:regulation of kidney size"/>
    <property type="evidence" value="ECO:0000315"/>
    <property type="project" value="CACAO"/>
</dbReference>
<dbReference type="GO" id="GO:0032526">
    <property type="term" value="P:response to retinoic acid"/>
    <property type="evidence" value="ECO:0000314"/>
    <property type="project" value="UniProtKB"/>
</dbReference>
<dbReference type="GO" id="GO:0048538">
    <property type="term" value="P:thymus development"/>
    <property type="evidence" value="ECO:0000315"/>
    <property type="project" value="MGI"/>
</dbReference>
<dbReference type="InterPro" id="IPR026905">
    <property type="entry name" value="ASX-like_PHD"/>
</dbReference>
<dbReference type="InterPro" id="IPR024811">
    <property type="entry name" value="ASX/ASX-like"/>
</dbReference>
<dbReference type="InterPro" id="IPR028020">
    <property type="entry name" value="ASX_DEUBAD_dom"/>
</dbReference>
<dbReference type="InterPro" id="IPR007759">
    <property type="entry name" value="Asxl_HARE-HTH"/>
</dbReference>
<dbReference type="InterPro" id="IPR044867">
    <property type="entry name" value="DEUBAD_dom"/>
</dbReference>
<dbReference type="PANTHER" id="PTHR13578">
    <property type="entry name" value="ADDITIONAL SEX COMBS LIKE PROTEIN ASXL"/>
    <property type="match status" value="1"/>
</dbReference>
<dbReference type="PANTHER" id="PTHR13578:SF19">
    <property type="entry name" value="POLYCOMB GROUP PROTEIN ASXL1"/>
    <property type="match status" value="1"/>
</dbReference>
<dbReference type="Pfam" id="PF13919">
    <property type="entry name" value="ASXH"/>
    <property type="match status" value="1"/>
</dbReference>
<dbReference type="Pfam" id="PF05066">
    <property type="entry name" value="HARE-HTH"/>
    <property type="match status" value="1"/>
</dbReference>
<dbReference type="Pfam" id="PF13922">
    <property type="entry name" value="PHD_3"/>
    <property type="match status" value="1"/>
</dbReference>
<dbReference type="PROSITE" id="PS51916">
    <property type="entry name" value="DEUBAD"/>
    <property type="match status" value="1"/>
</dbReference>
<dbReference type="PROSITE" id="PS51913">
    <property type="entry name" value="HTH_HARE"/>
    <property type="match status" value="1"/>
</dbReference>
<evidence type="ECO:0000250" key="1"/>
<evidence type="ECO:0000250" key="2">
    <source>
        <dbReference type="UniProtKB" id="Q8IXJ9"/>
    </source>
</evidence>
<evidence type="ECO:0000255" key="3">
    <source>
        <dbReference type="PROSITE-ProRule" id="PRU00768"/>
    </source>
</evidence>
<evidence type="ECO:0000255" key="4">
    <source>
        <dbReference type="PROSITE-ProRule" id="PRU01261"/>
    </source>
</evidence>
<evidence type="ECO:0000255" key="5">
    <source>
        <dbReference type="PROSITE-ProRule" id="PRU01264"/>
    </source>
</evidence>
<evidence type="ECO:0000256" key="6">
    <source>
        <dbReference type="SAM" id="MobiDB-lite"/>
    </source>
</evidence>
<evidence type="ECO:0000269" key="7">
    <source>
    </source>
</evidence>
<evidence type="ECO:0000269" key="8">
    <source>
    </source>
</evidence>
<evidence type="ECO:0000269" key="9">
    <source>
    </source>
</evidence>
<evidence type="ECO:0000269" key="10">
    <source>
    </source>
</evidence>
<evidence type="ECO:0000269" key="11">
    <source>
    </source>
</evidence>
<evidence type="ECO:0000305" key="12"/>
<keyword id="KW-0156">Chromatin regulator</keyword>
<keyword id="KW-0479">Metal-binding</keyword>
<keyword id="KW-0539">Nucleus</keyword>
<keyword id="KW-0597">Phosphoprotein</keyword>
<keyword id="KW-1185">Reference proteome</keyword>
<keyword id="KW-0677">Repeat</keyword>
<keyword id="KW-0678">Repressor</keyword>
<keyword id="KW-0804">Transcription</keyword>
<keyword id="KW-0805">Transcription regulation</keyword>
<keyword id="KW-0832">Ubl conjugation</keyword>
<keyword id="KW-0833">Ubl conjugation pathway</keyword>
<keyword id="KW-0862">Zinc</keyword>
<keyword id="KW-0863">Zinc-finger</keyword>
<protein>
    <recommendedName>
        <fullName>Polycomb group protein ASXL1</fullName>
    </recommendedName>
    <alternativeName>
        <fullName>Additional sex combs-like protein 1</fullName>
    </alternativeName>
</protein>
<sequence length="1514" mass="162674">MKDKQKRKKERTWAEAARLVLENYSDAPMTPKQILQVIEAEGLKEMRSGTSPLACLNAMLHSNSRGGEGLFYKLPGRISLFTLKKDAVQWSRNAATVDGDEPEDSADVESCGSNEASTVSGENDVSLDETSSNASCSTESQSRPLSNPRDSHRASSQANKQKKRTGVMLPRVVLTPLKVNGAHVEPASGFSGRHADGESGSPSSSSSGSLALGNSAIRGQAEVTRDPAPLLRGFRKPATGQMKRNRGEEVDFETPGSILVNTNLRALINSRTFHALPLHFQQQLLLLLPEVDRQVGTDGLLRLSGSALNNEFFTHAAQSWRERLADGEFTHEMQVRLRQEMEKEKKVEQWKEKFFEDYYGQKLGLTKEESLQQKEVQEEAKVKSGLCVSGESVRPQRGPNTRQRDGHFKKRSRPDLRTRSRRNIYKKQEPEQAGVAKDASAAPDVSLSKDTKTDLAGVNSTPGPDVSSATSGQEGPKCPSEPVASQIQAERDNLACASASPDRIPTLPQDTVDQETKDQKRKSFEQEASASFPEKKPRLEDRQSFRNTIESVHTEKPQPTKEEPKVPPIRIQLSRIKPPWVAKGRPTYQICPRIVPITESSCRGWTGARTLADIKARALQARGARGYHCNRETATTAIGGGGGPGGGGSGAIDEGGGRDSSSGDGSEACGHPEPRGAPSTSGESASDLQRTQLLPPCPLNGEHTPAEAAMPRARREDSASLRKEESCLLKRVPGVLTSGLEDASQPPIAPTGDQPCQALPPLSSQTPVAEMLTEQPKLLLDDRTECESSREDQGPTIPSESSSGRFPLGDLLGGGSDQAFDNMKEPVSMTPTFISELSLANYLQDRPDDDGLGLGATGLLIRESSRQEALTEAFASGSPTSWVPILSNYEVIKTSDPESRENIPCPEPQDEKEWERAVPLIAATESVPQPESCISHWTPPPAAVGSTGSDSEQVDLERLEMNGISEAPSPHSESTDTASDSEGHLSEDSSEVDASEVTVVKGSLGGDEKQDWDPSASLSKVNNDLSVLTRTGGVAASQSWVSRVCSVPHKIPDSLLLSSTECQPRSVCPLRPGSSVEVTNPLVMHLLHGNLPLEKVLPPGHRSSRLESSQLPLREQSQDRGTLQGTGENNRLAARINPGSAQTLKESILAQSYGASAGLVRAMASKAPAMSQKIAKMVTSLDSQHPETELTPSSGNLEEIDSKEHLSSFLCEEQKEGHSLSQGSDPGAAPGQCLGDHTTSKVPCFSSTNVSLSFGSEQTDGTLSDQNNAGGHEKKLFGPGNTVTTLQCPRSEEQTPLPAEVPPVFPSRKIEPSKNSVSGGVQTTRENRMPKPPPVSADSIKTEQTFLRDPIKADAENRKAAGYSSLELVGHLQGMPFVVDLPFWKLPREPGKGFSQPLEPSSIPSQLNIKQALYGKLSKLQLSPTSFNYSSSSATFPKGLAGGVVQLSHKASFGTGHTASLSLQMFADSSAVESISLQCACSLKAMIMCQGCGAFCHDDCIGPSKLCVLCLVVR</sequence>
<gene>
    <name type="primary">Asxl1</name>
    <name type="synonym">Kiaa0978</name>
</gene>
<organism>
    <name type="scientific">Mus musculus</name>
    <name type="common">Mouse</name>
    <dbReference type="NCBI Taxonomy" id="10090"/>
    <lineage>
        <taxon>Eukaryota</taxon>
        <taxon>Metazoa</taxon>
        <taxon>Chordata</taxon>
        <taxon>Craniata</taxon>
        <taxon>Vertebrata</taxon>
        <taxon>Euteleostomi</taxon>
        <taxon>Mammalia</taxon>
        <taxon>Eutheria</taxon>
        <taxon>Euarchontoglires</taxon>
        <taxon>Glires</taxon>
        <taxon>Rodentia</taxon>
        <taxon>Myomorpha</taxon>
        <taxon>Muroidea</taxon>
        <taxon>Muridae</taxon>
        <taxon>Murinae</taxon>
        <taxon>Mus</taxon>
        <taxon>Mus</taxon>
    </lineage>
</organism>
<name>ASXL1_MOUSE</name>
<proteinExistence type="evidence at protein level"/>
<feature type="chain" id="PRO_0000059322" description="Polycomb group protein ASXL1">
    <location>
        <begin position="1"/>
        <end position="1514"/>
    </location>
</feature>
<feature type="domain" description="HTH HARE-type" evidence="4">
    <location>
        <begin position="11"/>
        <end position="86"/>
    </location>
</feature>
<feature type="domain" description="DEUBAD" evidence="5">
    <location>
        <begin position="255"/>
        <end position="364"/>
    </location>
</feature>
<feature type="zinc finger region" description="PHD-type; atypical">
    <location>
        <begin position="1476"/>
        <end position="1513"/>
    </location>
</feature>
<feature type="region of interest" description="Disordered" evidence="6">
    <location>
        <begin position="95"/>
        <end position="170"/>
    </location>
</feature>
<feature type="region of interest" description="Disordered" evidence="6">
    <location>
        <begin position="183"/>
        <end position="249"/>
    </location>
</feature>
<feature type="region of interest" description="Interaction with nucleosomal DNA forming a DNA clamp with BAP1" evidence="2">
    <location>
        <begin position="243"/>
        <end position="246"/>
    </location>
</feature>
<feature type="region of interest" description="Interaction with NCOA1" evidence="2">
    <location>
        <begin position="300"/>
        <end position="655"/>
    </location>
</feature>
<feature type="region of interest" description="Interaction with nucleosomal DNA" evidence="2">
    <location>
        <begin position="336"/>
        <end position="346"/>
    </location>
</feature>
<feature type="region of interest" description="Disordered" evidence="6">
    <location>
        <begin position="378"/>
        <end position="543"/>
    </location>
</feature>
<feature type="region of interest" description="Disordered" evidence="6">
    <location>
        <begin position="635"/>
        <end position="823"/>
    </location>
</feature>
<feature type="region of interest" description="Disordered" evidence="6">
    <location>
        <begin position="895"/>
        <end position="914"/>
    </location>
</feature>
<feature type="region of interest" description="Disordered" evidence="6">
    <location>
        <begin position="926"/>
        <end position="952"/>
    </location>
</feature>
<feature type="region of interest" description="Disordered" evidence="6">
    <location>
        <begin position="964"/>
        <end position="995"/>
    </location>
</feature>
<feature type="region of interest" description="Required for interaction with RARA" evidence="1">
    <location>
        <begin position="1082"/>
        <end position="1087"/>
    </location>
</feature>
<feature type="region of interest" description="Disordered" evidence="6">
    <location>
        <begin position="1095"/>
        <end position="1131"/>
    </location>
</feature>
<feature type="region of interest" description="Disordered" evidence="6">
    <location>
        <begin position="1213"/>
        <end position="1234"/>
    </location>
</feature>
<feature type="region of interest" description="Disordered" evidence="6">
    <location>
        <begin position="1256"/>
        <end position="1338"/>
    </location>
</feature>
<feature type="short sequence motif" description="LXXLL motif 1">
    <location>
        <begin position="284"/>
        <end position="288"/>
    </location>
</feature>
<feature type="short sequence motif" description="NEF motif" evidence="2">
    <location>
        <begin position="310"/>
        <end position="315"/>
    </location>
</feature>
<feature type="short sequence motif" description="Nuclear localization signal" evidence="3">
    <location>
        <begin position="408"/>
        <end position="415"/>
    </location>
</feature>
<feature type="short sequence motif" description="LXXLL motif 2">
    <location>
        <begin position="808"/>
        <end position="812"/>
    </location>
</feature>
<feature type="compositionally biased region" description="Acidic residues" evidence="6">
    <location>
        <begin position="98"/>
        <end position="107"/>
    </location>
</feature>
<feature type="compositionally biased region" description="Polar residues" evidence="6">
    <location>
        <begin position="111"/>
        <end position="145"/>
    </location>
</feature>
<feature type="compositionally biased region" description="Low complexity" evidence="6">
    <location>
        <begin position="199"/>
        <end position="209"/>
    </location>
</feature>
<feature type="compositionally biased region" description="Polar residues" evidence="6">
    <location>
        <begin position="458"/>
        <end position="473"/>
    </location>
</feature>
<feature type="compositionally biased region" description="Basic and acidic residues" evidence="6">
    <location>
        <begin position="514"/>
        <end position="525"/>
    </location>
</feature>
<feature type="compositionally biased region" description="Basic and acidic residues" evidence="6">
    <location>
        <begin position="533"/>
        <end position="543"/>
    </location>
</feature>
<feature type="compositionally biased region" description="Gly residues" evidence="6">
    <location>
        <begin position="638"/>
        <end position="654"/>
    </location>
</feature>
<feature type="compositionally biased region" description="Polar residues" evidence="6">
    <location>
        <begin position="678"/>
        <end position="692"/>
    </location>
</feature>
<feature type="compositionally biased region" description="Basic and acidic residues" evidence="6">
    <location>
        <begin position="713"/>
        <end position="728"/>
    </location>
</feature>
<feature type="compositionally biased region" description="Basic and acidic residues" evidence="6">
    <location>
        <begin position="779"/>
        <end position="793"/>
    </location>
</feature>
<feature type="compositionally biased region" description="Polar residues" evidence="6">
    <location>
        <begin position="971"/>
        <end position="980"/>
    </location>
</feature>
<feature type="compositionally biased region" description="Polar residues" evidence="6">
    <location>
        <begin position="1119"/>
        <end position="1129"/>
    </location>
</feature>
<feature type="compositionally biased region" description="Polar residues" evidence="6">
    <location>
        <begin position="1256"/>
        <end position="1269"/>
    </location>
</feature>
<feature type="compositionally biased region" description="Polar residues" evidence="6">
    <location>
        <begin position="1313"/>
        <end position="1324"/>
    </location>
</feature>
<feature type="modified residue" description="Phosphoserine" evidence="2">
    <location>
        <position position="498"/>
    </location>
</feature>
<feature type="modified residue" description="Phosphoserine" evidence="2">
    <location>
        <position position="500"/>
    </location>
</feature>
<reference key="1">
    <citation type="journal article" date="2003" name="DNA Res.">
        <title>Prediction of the coding sequences of mouse homologues of KIAA gene: II. The complete nucleotide sequences of 400 mouse KIAA-homologous cDNAs identified by screening of terminal sequences of cDNA clones randomly sampled from size-fractionated libraries.</title>
        <authorList>
            <person name="Okazaki N."/>
            <person name="Kikuno R."/>
            <person name="Ohara R."/>
            <person name="Inamoto S."/>
            <person name="Aizawa H."/>
            <person name="Yuasa S."/>
            <person name="Nakajima D."/>
            <person name="Nagase T."/>
            <person name="Ohara O."/>
            <person name="Koga H."/>
        </authorList>
    </citation>
    <scope>NUCLEOTIDE SEQUENCE [LARGE SCALE MRNA]</scope>
    <source>
        <tissue>Brain</tissue>
    </source>
</reference>
<reference key="2">
    <citation type="journal article" date="2006" name="J. Biol. Chem.">
        <title>Additional sex comb-like 1 (ASXL1), in cooperation with SRC-1, acts as a ligand-dependent coactivator for retinoic acid receptor.</title>
        <authorList>
            <person name="Cho Y.S."/>
            <person name="Kim E.J."/>
            <person name="Park U.H."/>
            <person name="Sin H.S."/>
            <person name="Um S.J."/>
        </authorList>
    </citation>
    <scope>FUNCTION</scope>
    <scope>INTERACTION WITH RARA AND RXRA</scope>
</reference>
<reference key="3">
    <citation type="journal article" date="2007" name="Proc. Natl. Acad. Sci. U.S.A.">
        <title>Large-scale phosphorylation analysis of mouse liver.</title>
        <authorList>
            <person name="Villen J."/>
            <person name="Beausoleil S.A."/>
            <person name="Gerber S.A."/>
            <person name="Gygi S.P."/>
        </authorList>
    </citation>
    <scope>IDENTIFICATION BY MASS SPECTROMETRY [LARGE SCALE ANALYSIS]</scope>
    <source>
        <tissue>Liver</tissue>
    </source>
</reference>
<reference key="4">
    <citation type="journal article" date="2010" name="J. Biol. Chem.">
        <title>ASXL1 represses retinoic acid receptor-mediated transcription through associating with HP1 and LSD1.</title>
        <authorList>
            <person name="Lee S.W."/>
            <person name="Cho Y.S."/>
            <person name="Na J.M."/>
            <person name="Park U.H."/>
            <person name="Kang M."/>
            <person name="Kim E.J."/>
            <person name="Um S.J."/>
        </authorList>
    </citation>
    <scope>RETRACTED PAPER</scope>
</reference>
<reference key="5">
    <citation type="journal article" date="2015" name="J. Biol. Chem.">
        <title>Retraction: 'ASXL1 represses retinoic acid receptor-mediated transcription through associating with HP1 and LSD1'.</title>
        <authorList>
            <person name="Lee S.W."/>
            <person name="Cho Y.S."/>
            <person name="Na J.M."/>
            <person name="Park U.H."/>
            <person name="Kang M."/>
            <person name="Kim E.J."/>
            <person name="Um S.J."/>
        </authorList>
    </citation>
    <scope>RETRACTION NOTICE OF PUBMED:19880879</scope>
</reference>
<reference key="6">
    <citation type="journal article" date="2011" name="J. Biol. Chem.">
        <title>Additional sex comb-like (ASXL) proteins 1 and 2 play opposite roles in adipogenesis via reciprocal regulation of peroxisome proliferator-activated receptor {gamma}.</title>
        <authorList>
            <person name="Park U.H."/>
            <person name="Yoon S.K."/>
            <person name="Park T."/>
            <person name="Kim E.J."/>
            <person name="Um S.J."/>
        </authorList>
    </citation>
    <scope>FUNCTION</scope>
    <scope>INTERACTION WITH PPARA AND PPARG</scope>
</reference>
<reference key="7">
    <citation type="journal article" date="2020" name="Genome Res.">
        <title>PR-DUB maintains the expression of critical genes through FOXK1/2- and ASXL1/2/3-dependent recruitment to chromatin and H2AK119ub1 deubiquitination.</title>
        <authorList>
            <person name="Kolovos P."/>
            <person name="Nishimura K."/>
            <person name="Sankar A."/>
            <person name="Sidoli S."/>
            <person name="Cloos P.A."/>
            <person name="Helin K."/>
            <person name="Christensen J."/>
        </authorList>
    </citation>
    <scope>FUNCTION</scope>
</reference>
<reference key="8">
    <citation type="journal article" date="2021" name="Elife">
        <title>BAP1/ASXL complex modulation regulates epithelial-mesenchymal transition during trophoblast differentiation and invasion.</title>
        <authorList>
            <person name="Perez-Garcia V."/>
            <person name="Lea G."/>
            <person name="Lopez-Jimenez P."/>
            <person name="Okkenhaug H."/>
            <person name="Burton G.J."/>
            <person name="Moffett A."/>
            <person name="Turco M.Y."/>
            <person name="Hemberger M."/>
        </authorList>
    </citation>
    <scope>FUNCTION</scope>
    <scope>INTERACTION WITH BAP1</scope>
    <scope>DEVELOPMENTAL STAGE</scope>
</reference>
<accession>P59598</accession>